<sequence>MLKNINPTKTVAWSELKTLFDANADLKISTLFANDPQRFKAFSRQFDDHLLVDFSKNLITEEIFTKLLALAEEVDLKGAIKAQFSGEKINVTENRAVLHSALRNRSNTPVFVDGENVMPKVNAVLEKMKAFCTKVHSGEWKGYTGKAITDIVNIGIGGSDLGPFMVTEALRPYKVEGIDAHFVSNVDGTHIVETLAKVDPETTLFLVASKTFTTQETMTNAHSAREWFLNFAEDETFVAKHFAALSTNADAVAEFGIDVDNMFEFWDWVGGRYSIWSAIGLSIALTIGFDNYEVLLGGAHEMDKHFEETDFENNIPVILAVIGVWYNNFHGAESEAILPYDQYMHRFPAYFQQGNMESNGKCVDRNGESVDYQTGPIIWGEPGTNGQHAFYQLIHQGTKLIPCDFIAPAVSHNPVGDHHAKLLSNFFAQTEALAFGKSKETVEAEFAAAGKTTEEVAHLIPSKVFAGNNPTNSILVNKITPQTLGQLIAMYEQKIFVQGVIWNIFSFDQWGVELGKQLAGQILPELTTVNAVDSHDSSTNGLINAWKAWK</sequence>
<accession>A1SRS5</accession>
<protein>
    <recommendedName>
        <fullName evidence="1">Glucose-6-phosphate isomerase</fullName>
        <shortName evidence="1">GPI</shortName>
        <ecNumber evidence="1">5.3.1.9</ecNumber>
    </recommendedName>
    <alternativeName>
        <fullName evidence="1">Phosphoglucose isomerase</fullName>
        <shortName evidence="1">PGI</shortName>
    </alternativeName>
    <alternativeName>
        <fullName evidence="1">Phosphohexose isomerase</fullName>
        <shortName evidence="1">PHI</shortName>
    </alternativeName>
</protein>
<reference key="1">
    <citation type="journal article" date="2008" name="BMC Genomics">
        <title>Genomics of an extreme psychrophile, Psychromonas ingrahamii.</title>
        <authorList>
            <person name="Riley M."/>
            <person name="Staley J.T."/>
            <person name="Danchin A."/>
            <person name="Wang T.Z."/>
            <person name="Brettin T.S."/>
            <person name="Hauser L.J."/>
            <person name="Land M.L."/>
            <person name="Thompson L.S."/>
        </authorList>
    </citation>
    <scope>NUCLEOTIDE SEQUENCE [LARGE SCALE GENOMIC DNA]</scope>
    <source>
        <strain>DSM 17664 / CCUG 51855 / 37</strain>
    </source>
</reference>
<organism>
    <name type="scientific">Psychromonas ingrahamii (strain DSM 17664 / CCUG 51855 / 37)</name>
    <dbReference type="NCBI Taxonomy" id="357804"/>
    <lineage>
        <taxon>Bacteria</taxon>
        <taxon>Pseudomonadati</taxon>
        <taxon>Pseudomonadota</taxon>
        <taxon>Gammaproteobacteria</taxon>
        <taxon>Alteromonadales</taxon>
        <taxon>Psychromonadaceae</taxon>
        <taxon>Psychromonas</taxon>
    </lineage>
</organism>
<keyword id="KW-0963">Cytoplasm</keyword>
<keyword id="KW-0312">Gluconeogenesis</keyword>
<keyword id="KW-0324">Glycolysis</keyword>
<keyword id="KW-0413">Isomerase</keyword>
<keyword id="KW-1185">Reference proteome</keyword>
<evidence type="ECO:0000255" key="1">
    <source>
        <dbReference type="HAMAP-Rule" id="MF_00473"/>
    </source>
</evidence>
<proteinExistence type="inferred from homology"/>
<gene>
    <name evidence="1" type="primary">pgi</name>
    <name type="ordered locus">Ping_0324</name>
</gene>
<feature type="chain" id="PRO_1000014007" description="Glucose-6-phosphate isomerase">
    <location>
        <begin position="1"/>
        <end position="550"/>
    </location>
</feature>
<feature type="active site" description="Proton donor" evidence="1">
    <location>
        <position position="357"/>
    </location>
</feature>
<feature type="active site" evidence="1">
    <location>
        <position position="388"/>
    </location>
</feature>
<feature type="active site" evidence="1">
    <location>
        <position position="516"/>
    </location>
</feature>
<dbReference type="EC" id="5.3.1.9" evidence="1"/>
<dbReference type="EMBL" id="CP000510">
    <property type="protein sequence ID" value="ABM02190.1"/>
    <property type="molecule type" value="Genomic_DNA"/>
</dbReference>
<dbReference type="RefSeq" id="WP_011768749.1">
    <property type="nucleotide sequence ID" value="NC_008709.1"/>
</dbReference>
<dbReference type="SMR" id="A1SRS5"/>
<dbReference type="STRING" id="357804.Ping_0324"/>
<dbReference type="KEGG" id="pin:Ping_0324"/>
<dbReference type="eggNOG" id="COG0166">
    <property type="taxonomic scope" value="Bacteria"/>
</dbReference>
<dbReference type="HOGENOM" id="CLU_017947_3_1_6"/>
<dbReference type="OrthoDB" id="140919at2"/>
<dbReference type="UniPathway" id="UPA00109">
    <property type="reaction ID" value="UER00181"/>
</dbReference>
<dbReference type="UniPathway" id="UPA00138"/>
<dbReference type="Proteomes" id="UP000000639">
    <property type="component" value="Chromosome"/>
</dbReference>
<dbReference type="GO" id="GO:0005829">
    <property type="term" value="C:cytosol"/>
    <property type="evidence" value="ECO:0007669"/>
    <property type="project" value="TreeGrafter"/>
</dbReference>
<dbReference type="GO" id="GO:0097367">
    <property type="term" value="F:carbohydrate derivative binding"/>
    <property type="evidence" value="ECO:0007669"/>
    <property type="project" value="InterPro"/>
</dbReference>
<dbReference type="GO" id="GO:0004347">
    <property type="term" value="F:glucose-6-phosphate isomerase activity"/>
    <property type="evidence" value="ECO:0007669"/>
    <property type="project" value="UniProtKB-UniRule"/>
</dbReference>
<dbReference type="GO" id="GO:0048029">
    <property type="term" value="F:monosaccharide binding"/>
    <property type="evidence" value="ECO:0007669"/>
    <property type="project" value="TreeGrafter"/>
</dbReference>
<dbReference type="GO" id="GO:0006094">
    <property type="term" value="P:gluconeogenesis"/>
    <property type="evidence" value="ECO:0007669"/>
    <property type="project" value="UniProtKB-UniRule"/>
</dbReference>
<dbReference type="GO" id="GO:0051156">
    <property type="term" value="P:glucose 6-phosphate metabolic process"/>
    <property type="evidence" value="ECO:0007669"/>
    <property type="project" value="TreeGrafter"/>
</dbReference>
<dbReference type="GO" id="GO:0006096">
    <property type="term" value="P:glycolytic process"/>
    <property type="evidence" value="ECO:0007669"/>
    <property type="project" value="UniProtKB-UniRule"/>
</dbReference>
<dbReference type="CDD" id="cd05015">
    <property type="entry name" value="SIS_PGI_1"/>
    <property type="match status" value="1"/>
</dbReference>
<dbReference type="CDD" id="cd05016">
    <property type="entry name" value="SIS_PGI_2"/>
    <property type="match status" value="1"/>
</dbReference>
<dbReference type="FunFam" id="1.10.1390.10:FF:000001">
    <property type="entry name" value="Glucose-6-phosphate isomerase"/>
    <property type="match status" value="1"/>
</dbReference>
<dbReference type="FunFam" id="3.40.50.10490:FF:000004">
    <property type="entry name" value="Glucose-6-phosphate isomerase"/>
    <property type="match status" value="1"/>
</dbReference>
<dbReference type="Gene3D" id="1.10.1390.10">
    <property type="match status" value="1"/>
</dbReference>
<dbReference type="Gene3D" id="3.40.50.10490">
    <property type="entry name" value="Glucose-6-phosphate isomerase like protein, domain 1"/>
    <property type="match status" value="2"/>
</dbReference>
<dbReference type="HAMAP" id="MF_00473">
    <property type="entry name" value="G6P_isomerase"/>
    <property type="match status" value="1"/>
</dbReference>
<dbReference type="InterPro" id="IPR001672">
    <property type="entry name" value="G6P_Isomerase"/>
</dbReference>
<dbReference type="InterPro" id="IPR023096">
    <property type="entry name" value="G6P_Isomerase_C"/>
</dbReference>
<dbReference type="InterPro" id="IPR018189">
    <property type="entry name" value="Phosphoglucose_isomerase_CS"/>
</dbReference>
<dbReference type="InterPro" id="IPR046348">
    <property type="entry name" value="SIS_dom_sf"/>
</dbReference>
<dbReference type="InterPro" id="IPR035476">
    <property type="entry name" value="SIS_PGI_1"/>
</dbReference>
<dbReference type="InterPro" id="IPR035482">
    <property type="entry name" value="SIS_PGI_2"/>
</dbReference>
<dbReference type="NCBIfam" id="NF001211">
    <property type="entry name" value="PRK00179.1"/>
    <property type="match status" value="1"/>
</dbReference>
<dbReference type="PANTHER" id="PTHR11469">
    <property type="entry name" value="GLUCOSE-6-PHOSPHATE ISOMERASE"/>
    <property type="match status" value="1"/>
</dbReference>
<dbReference type="PANTHER" id="PTHR11469:SF1">
    <property type="entry name" value="GLUCOSE-6-PHOSPHATE ISOMERASE"/>
    <property type="match status" value="1"/>
</dbReference>
<dbReference type="Pfam" id="PF00342">
    <property type="entry name" value="PGI"/>
    <property type="match status" value="1"/>
</dbReference>
<dbReference type="PRINTS" id="PR00662">
    <property type="entry name" value="G6PISOMERASE"/>
</dbReference>
<dbReference type="SUPFAM" id="SSF53697">
    <property type="entry name" value="SIS domain"/>
    <property type="match status" value="1"/>
</dbReference>
<dbReference type="PROSITE" id="PS00765">
    <property type="entry name" value="P_GLUCOSE_ISOMERASE_1"/>
    <property type="match status" value="1"/>
</dbReference>
<dbReference type="PROSITE" id="PS00174">
    <property type="entry name" value="P_GLUCOSE_ISOMERASE_2"/>
    <property type="match status" value="1"/>
</dbReference>
<dbReference type="PROSITE" id="PS51463">
    <property type="entry name" value="P_GLUCOSE_ISOMERASE_3"/>
    <property type="match status" value="1"/>
</dbReference>
<comment type="function">
    <text evidence="1">Catalyzes the reversible isomerization of glucose-6-phosphate to fructose-6-phosphate.</text>
</comment>
<comment type="catalytic activity">
    <reaction evidence="1">
        <text>alpha-D-glucose 6-phosphate = beta-D-fructose 6-phosphate</text>
        <dbReference type="Rhea" id="RHEA:11816"/>
        <dbReference type="ChEBI" id="CHEBI:57634"/>
        <dbReference type="ChEBI" id="CHEBI:58225"/>
        <dbReference type="EC" id="5.3.1.9"/>
    </reaction>
</comment>
<comment type="pathway">
    <text evidence="1">Carbohydrate biosynthesis; gluconeogenesis.</text>
</comment>
<comment type="pathway">
    <text evidence="1">Carbohydrate degradation; glycolysis; D-glyceraldehyde 3-phosphate and glycerone phosphate from D-glucose: step 2/4.</text>
</comment>
<comment type="subcellular location">
    <subcellularLocation>
        <location evidence="1">Cytoplasm</location>
    </subcellularLocation>
</comment>
<comment type="similarity">
    <text evidence="1">Belongs to the GPI family.</text>
</comment>
<name>G6PI_PSYIN</name>